<proteinExistence type="inferred from homology"/>
<reference key="1">
    <citation type="submission" date="2007-03" db="EMBL/GenBank/DDBJ databases">
        <title>Complete sequence of chromosome 1 of Burkholderia vietnamiensis G4.</title>
        <authorList>
            <consortium name="US DOE Joint Genome Institute"/>
            <person name="Copeland A."/>
            <person name="Lucas S."/>
            <person name="Lapidus A."/>
            <person name="Barry K."/>
            <person name="Detter J.C."/>
            <person name="Glavina del Rio T."/>
            <person name="Hammon N."/>
            <person name="Israni S."/>
            <person name="Dalin E."/>
            <person name="Tice H."/>
            <person name="Pitluck S."/>
            <person name="Chain P."/>
            <person name="Malfatti S."/>
            <person name="Shin M."/>
            <person name="Vergez L."/>
            <person name="Schmutz J."/>
            <person name="Larimer F."/>
            <person name="Land M."/>
            <person name="Hauser L."/>
            <person name="Kyrpides N."/>
            <person name="Tiedje J."/>
            <person name="Richardson P."/>
        </authorList>
    </citation>
    <scope>NUCLEOTIDE SEQUENCE [LARGE SCALE GENOMIC DNA]</scope>
    <source>
        <strain>G4 / LMG 22486</strain>
    </source>
</reference>
<protein>
    <recommendedName>
        <fullName evidence="1">Succinate--CoA ligase [ADP-forming] subunit beta</fullName>
        <ecNumber evidence="1">6.2.1.5</ecNumber>
    </recommendedName>
    <alternativeName>
        <fullName evidence="1">Succinyl-CoA synthetase subunit beta</fullName>
        <shortName evidence="1">SCS-beta</shortName>
    </alternativeName>
</protein>
<organism>
    <name type="scientific">Burkholderia vietnamiensis (strain G4 / LMG 22486)</name>
    <name type="common">Burkholderia cepacia (strain R1808)</name>
    <dbReference type="NCBI Taxonomy" id="269482"/>
    <lineage>
        <taxon>Bacteria</taxon>
        <taxon>Pseudomonadati</taxon>
        <taxon>Pseudomonadota</taxon>
        <taxon>Betaproteobacteria</taxon>
        <taxon>Burkholderiales</taxon>
        <taxon>Burkholderiaceae</taxon>
        <taxon>Burkholderia</taxon>
        <taxon>Burkholderia cepacia complex</taxon>
    </lineage>
</organism>
<comment type="function">
    <text evidence="1">Succinyl-CoA synthetase functions in the citric acid cycle (TCA), coupling the hydrolysis of succinyl-CoA to the synthesis of either ATP or GTP and thus represents the only step of substrate-level phosphorylation in the TCA. The beta subunit provides nucleotide specificity of the enzyme and binds the substrate succinate, while the binding sites for coenzyme A and phosphate are found in the alpha subunit.</text>
</comment>
<comment type="catalytic activity">
    <reaction evidence="1">
        <text>succinate + ATP + CoA = succinyl-CoA + ADP + phosphate</text>
        <dbReference type="Rhea" id="RHEA:17661"/>
        <dbReference type="ChEBI" id="CHEBI:30031"/>
        <dbReference type="ChEBI" id="CHEBI:30616"/>
        <dbReference type="ChEBI" id="CHEBI:43474"/>
        <dbReference type="ChEBI" id="CHEBI:57287"/>
        <dbReference type="ChEBI" id="CHEBI:57292"/>
        <dbReference type="ChEBI" id="CHEBI:456216"/>
        <dbReference type="EC" id="6.2.1.5"/>
    </reaction>
    <physiologicalReaction direction="right-to-left" evidence="1">
        <dbReference type="Rhea" id="RHEA:17663"/>
    </physiologicalReaction>
</comment>
<comment type="catalytic activity">
    <reaction evidence="1">
        <text>GTP + succinate + CoA = succinyl-CoA + GDP + phosphate</text>
        <dbReference type="Rhea" id="RHEA:22120"/>
        <dbReference type="ChEBI" id="CHEBI:30031"/>
        <dbReference type="ChEBI" id="CHEBI:37565"/>
        <dbReference type="ChEBI" id="CHEBI:43474"/>
        <dbReference type="ChEBI" id="CHEBI:57287"/>
        <dbReference type="ChEBI" id="CHEBI:57292"/>
        <dbReference type="ChEBI" id="CHEBI:58189"/>
    </reaction>
    <physiologicalReaction direction="right-to-left" evidence="1">
        <dbReference type="Rhea" id="RHEA:22122"/>
    </physiologicalReaction>
</comment>
<comment type="cofactor">
    <cofactor evidence="1">
        <name>Mg(2+)</name>
        <dbReference type="ChEBI" id="CHEBI:18420"/>
    </cofactor>
    <text evidence="1">Binds 1 Mg(2+) ion per subunit.</text>
</comment>
<comment type="pathway">
    <text evidence="1">Carbohydrate metabolism; tricarboxylic acid cycle; succinate from succinyl-CoA (ligase route): step 1/1.</text>
</comment>
<comment type="subunit">
    <text evidence="1">Heterotetramer of two alpha and two beta subunits.</text>
</comment>
<comment type="similarity">
    <text evidence="1">Belongs to the succinate/malate CoA ligase beta subunit family.</text>
</comment>
<keyword id="KW-0067">ATP-binding</keyword>
<keyword id="KW-0436">Ligase</keyword>
<keyword id="KW-0460">Magnesium</keyword>
<keyword id="KW-0479">Metal-binding</keyword>
<keyword id="KW-0547">Nucleotide-binding</keyword>
<keyword id="KW-0816">Tricarboxylic acid cycle</keyword>
<dbReference type="EC" id="6.2.1.5" evidence="1"/>
<dbReference type="EMBL" id="CP000614">
    <property type="protein sequence ID" value="ABO55751.1"/>
    <property type="molecule type" value="Genomic_DNA"/>
</dbReference>
<dbReference type="SMR" id="A4JHJ8"/>
<dbReference type="KEGG" id="bvi:Bcep1808_2760"/>
<dbReference type="eggNOG" id="COG0045">
    <property type="taxonomic scope" value="Bacteria"/>
</dbReference>
<dbReference type="HOGENOM" id="CLU_037430_0_2_4"/>
<dbReference type="UniPathway" id="UPA00223">
    <property type="reaction ID" value="UER00999"/>
</dbReference>
<dbReference type="Proteomes" id="UP000002287">
    <property type="component" value="Chromosome 1"/>
</dbReference>
<dbReference type="GO" id="GO:0005829">
    <property type="term" value="C:cytosol"/>
    <property type="evidence" value="ECO:0007669"/>
    <property type="project" value="TreeGrafter"/>
</dbReference>
<dbReference type="GO" id="GO:0042709">
    <property type="term" value="C:succinate-CoA ligase complex"/>
    <property type="evidence" value="ECO:0007669"/>
    <property type="project" value="TreeGrafter"/>
</dbReference>
<dbReference type="GO" id="GO:0005524">
    <property type="term" value="F:ATP binding"/>
    <property type="evidence" value="ECO:0007669"/>
    <property type="project" value="UniProtKB-UniRule"/>
</dbReference>
<dbReference type="GO" id="GO:0000287">
    <property type="term" value="F:magnesium ion binding"/>
    <property type="evidence" value="ECO:0007669"/>
    <property type="project" value="UniProtKB-UniRule"/>
</dbReference>
<dbReference type="GO" id="GO:0004775">
    <property type="term" value="F:succinate-CoA ligase (ADP-forming) activity"/>
    <property type="evidence" value="ECO:0007669"/>
    <property type="project" value="UniProtKB-UniRule"/>
</dbReference>
<dbReference type="GO" id="GO:0004776">
    <property type="term" value="F:succinate-CoA ligase (GDP-forming) activity"/>
    <property type="evidence" value="ECO:0007669"/>
    <property type="project" value="RHEA"/>
</dbReference>
<dbReference type="GO" id="GO:0006104">
    <property type="term" value="P:succinyl-CoA metabolic process"/>
    <property type="evidence" value="ECO:0007669"/>
    <property type="project" value="TreeGrafter"/>
</dbReference>
<dbReference type="GO" id="GO:0006099">
    <property type="term" value="P:tricarboxylic acid cycle"/>
    <property type="evidence" value="ECO:0007669"/>
    <property type="project" value="UniProtKB-UniRule"/>
</dbReference>
<dbReference type="FunFam" id="3.30.1490.20:FF:000002">
    <property type="entry name" value="Succinate--CoA ligase [ADP-forming] subunit beta"/>
    <property type="match status" value="1"/>
</dbReference>
<dbReference type="FunFam" id="3.30.470.20:FF:000002">
    <property type="entry name" value="Succinate--CoA ligase [ADP-forming] subunit beta"/>
    <property type="match status" value="1"/>
</dbReference>
<dbReference type="FunFam" id="3.40.50.261:FF:000001">
    <property type="entry name" value="Succinate--CoA ligase [ADP-forming] subunit beta"/>
    <property type="match status" value="1"/>
</dbReference>
<dbReference type="Gene3D" id="3.30.1490.20">
    <property type="entry name" value="ATP-grasp fold, A domain"/>
    <property type="match status" value="1"/>
</dbReference>
<dbReference type="Gene3D" id="3.30.470.20">
    <property type="entry name" value="ATP-grasp fold, B domain"/>
    <property type="match status" value="1"/>
</dbReference>
<dbReference type="Gene3D" id="3.40.50.261">
    <property type="entry name" value="Succinyl-CoA synthetase domains"/>
    <property type="match status" value="1"/>
</dbReference>
<dbReference type="HAMAP" id="MF_00558">
    <property type="entry name" value="Succ_CoA_beta"/>
    <property type="match status" value="1"/>
</dbReference>
<dbReference type="InterPro" id="IPR011761">
    <property type="entry name" value="ATP-grasp"/>
</dbReference>
<dbReference type="InterPro" id="IPR013650">
    <property type="entry name" value="ATP-grasp_succ-CoA_synth-type"/>
</dbReference>
<dbReference type="InterPro" id="IPR013815">
    <property type="entry name" value="ATP_grasp_subdomain_1"/>
</dbReference>
<dbReference type="InterPro" id="IPR017866">
    <property type="entry name" value="Succ-CoA_synthase_bsu_CS"/>
</dbReference>
<dbReference type="InterPro" id="IPR005811">
    <property type="entry name" value="SUCC_ACL_C"/>
</dbReference>
<dbReference type="InterPro" id="IPR005809">
    <property type="entry name" value="Succ_CoA_ligase-like_bsu"/>
</dbReference>
<dbReference type="InterPro" id="IPR016102">
    <property type="entry name" value="Succinyl-CoA_synth-like"/>
</dbReference>
<dbReference type="NCBIfam" id="NF001913">
    <property type="entry name" value="PRK00696.1"/>
    <property type="match status" value="1"/>
</dbReference>
<dbReference type="NCBIfam" id="TIGR01016">
    <property type="entry name" value="sucCoAbeta"/>
    <property type="match status" value="1"/>
</dbReference>
<dbReference type="PANTHER" id="PTHR11815:SF10">
    <property type="entry name" value="SUCCINATE--COA LIGASE [GDP-FORMING] SUBUNIT BETA, MITOCHONDRIAL"/>
    <property type="match status" value="1"/>
</dbReference>
<dbReference type="PANTHER" id="PTHR11815">
    <property type="entry name" value="SUCCINYL-COA SYNTHETASE BETA CHAIN"/>
    <property type="match status" value="1"/>
</dbReference>
<dbReference type="Pfam" id="PF08442">
    <property type="entry name" value="ATP-grasp_2"/>
    <property type="match status" value="1"/>
</dbReference>
<dbReference type="Pfam" id="PF00549">
    <property type="entry name" value="Ligase_CoA"/>
    <property type="match status" value="1"/>
</dbReference>
<dbReference type="PIRSF" id="PIRSF001554">
    <property type="entry name" value="SucCS_beta"/>
    <property type="match status" value="1"/>
</dbReference>
<dbReference type="SUPFAM" id="SSF56059">
    <property type="entry name" value="Glutathione synthetase ATP-binding domain-like"/>
    <property type="match status" value="1"/>
</dbReference>
<dbReference type="SUPFAM" id="SSF52210">
    <property type="entry name" value="Succinyl-CoA synthetase domains"/>
    <property type="match status" value="1"/>
</dbReference>
<dbReference type="PROSITE" id="PS50975">
    <property type="entry name" value="ATP_GRASP"/>
    <property type="match status" value="1"/>
</dbReference>
<dbReference type="PROSITE" id="PS01217">
    <property type="entry name" value="SUCCINYL_COA_LIG_3"/>
    <property type="match status" value="1"/>
</dbReference>
<evidence type="ECO:0000255" key="1">
    <source>
        <dbReference type="HAMAP-Rule" id="MF_00558"/>
    </source>
</evidence>
<sequence length="388" mass="41207">MKIHEYQGKEILRKFGVAVPRGKPAFSVDEAVKVAEELGGPVWVVKAQIHAGGRGKGGGVKVAKTIEQVREYANQILGMQLVTHQTGPEGQKVNRLLIEEGADIKQELYVSLVVDRVSQKIVLMGSSEGGMDIEEVAEKHPELIHKVIVEPSTGLLDAQADDLAAKIGVPAASIPQARTILQGLYKAFWETDASLAEINPLNVSGDGKVTALDAKFNFDSNALFRHPEIVAYRDLDEEDPAEIEASKFDLAYISLDGNIGCLVNGAGLAMATMDTIKLFGGEPANFLDVGGGATTEKVTEAFKLMLKNPGLKAILVNIFGGIMRCDVIAEGVIAGSKAVNLNVPLVVRMKGTNEDLGKKMLADSGLPIISADSMEEAAQKVVAAAAGK</sequence>
<name>SUCC_BURVG</name>
<gene>
    <name evidence="1" type="primary">sucC</name>
    <name type="ordered locus">Bcep1808_2760</name>
</gene>
<feature type="chain" id="PRO_1000082048" description="Succinate--CoA ligase [ADP-forming] subunit beta">
    <location>
        <begin position="1"/>
        <end position="388"/>
    </location>
</feature>
<feature type="domain" description="ATP-grasp" evidence="1">
    <location>
        <begin position="9"/>
        <end position="244"/>
    </location>
</feature>
<feature type="binding site" evidence="1">
    <location>
        <position position="46"/>
    </location>
    <ligand>
        <name>ATP</name>
        <dbReference type="ChEBI" id="CHEBI:30616"/>
    </ligand>
</feature>
<feature type="binding site" evidence="1">
    <location>
        <begin position="53"/>
        <end position="55"/>
    </location>
    <ligand>
        <name>ATP</name>
        <dbReference type="ChEBI" id="CHEBI:30616"/>
    </ligand>
</feature>
<feature type="binding site" evidence="1">
    <location>
        <position position="99"/>
    </location>
    <ligand>
        <name>ATP</name>
        <dbReference type="ChEBI" id="CHEBI:30616"/>
    </ligand>
</feature>
<feature type="binding site" evidence="1">
    <location>
        <position position="102"/>
    </location>
    <ligand>
        <name>ATP</name>
        <dbReference type="ChEBI" id="CHEBI:30616"/>
    </ligand>
</feature>
<feature type="binding site" evidence="1">
    <location>
        <position position="107"/>
    </location>
    <ligand>
        <name>ATP</name>
        <dbReference type="ChEBI" id="CHEBI:30616"/>
    </ligand>
</feature>
<feature type="binding site" evidence="1">
    <location>
        <position position="199"/>
    </location>
    <ligand>
        <name>Mg(2+)</name>
        <dbReference type="ChEBI" id="CHEBI:18420"/>
    </ligand>
</feature>
<feature type="binding site" evidence="1">
    <location>
        <position position="213"/>
    </location>
    <ligand>
        <name>Mg(2+)</name>
        <dbReference type="ChEBI" id="CHEBI:18420"/>
    </ligand>
</feature>
<feature type="binding site" evidence="1">
    <location>
        <position position="264"/>
    </location>
    <ligand>
        <name>substrate</name>
        <note>ligand shared with subunit alpha</note>
    </ligand>
</feature>
<feature type="binding site" evidence="1">
    <location>
        <begin position="321"/>
        <end position="323"/>
    </location>
    <ligand>
        <name>substrate</name>
        <note>ligand shared with subunit alpha</note>
    </ligand>
</feature>
<accession>A4JHJ8</accession>